<keyword id="KW-0687">Ribonucleoprotein</keyword>
<keyword id="KW-0689">Ribosomal protein</keyword>
<accession>A2C4U4</accession>
<reference key="1">
    <citation type="journal article" date="2007" name="PLoS Genet.">
        <title>Patterns and implications of gene gain and loss in the evolution of Prochlorococcus.</title>
        <authorList>
            <person name="Kettler G.C."/>
            <person name="Martiny A.C."/>
            <person name="Huang K."/>
            <person name="Zucker J."/>
            <person name="Coleman M.L."/>
            <person name="Rodrigue S."/>
            <person name="Chen F."/>
            <person name="Lapidus A."/>
            <person name="Ferriera S."/>
            <person name="Johnson J."/>
            <person name="Steglich C."/>
            <person name="Church G.M."/>
            <person name="Richardson P."/>
            <person name="Chisholm S.W."/>
        </authorList>
    </citation>
    <scope>NUCLEOTIDE SEQUENCE [LARGE SCALE GENOMIC DNA]</scope>
    <source>
        <strain>NATL1A</strain>
    </source>
</reference>
<name>RS10_PROM1</name>
<protein>
    <recommendedName>
        <fullName evidence="1">Small ribosomal subunit protein uS10</fullName>
    </recommendedName>
    <alternativeName>
        <fullName evidence="2">30S ribosomal protein S10</fullName>
    </alternativeName>
</protein>
<evidence type="ECO:0000255" key="1">
    <source>
        <dbReference type="HAMAP-Rule" id="MF_00508"/>
    </source>
</evidence>
<evidence type="ECO:0000305" key="2"/>
<sequence>MSTAIAQQKIRIRLKAFDRRMLDLSCDKIIETADTTAASAIGPIPLPTKRKIYCVLRSPHVDKDSREHFETRTHRRIIDIYSPSAKTIDALMKLDLPSGVDIEVKL</sequence>
<dbReference type="EMBL" id="CP000553">
    <property type="protein sequence ID" value="ABM76504.1"/>
    <property type="molecule type" value="Genomic_DNA"/>
</dbReference>
<dbReference type="RefSeq" id="WP_009788866.1">
    <property type="nucleotide sequence ID" value="NC_008819.1"/>
</dbReference>
<dbReference type="SMR" id="A2C4U4"/>
<dbReference type="KEGG" id="pme:NATL1_19481"/>
<dbReference type="eggNOG" id="COG0051">
    <property type="taxonomic scope" value="Bacteria"/>
</dbReference>
<dbReference type="HOGENOM" id="CLU_122625_1_3_3"/>
<dbReference type="Proteomes" id="UP000002592">
    <property type="component" value="Chromosome"/>
</dbReference>
<dbReference type="GO" id="GO:1990904">
    <property type="term" value="C:ribonucleoprotein complex"/>
    <property type="evidence" value="ECO:0007669"/>
    <property type="project" value="UniProtKB-KW"/>
</dbReference>
<dbReference type="GO" id="GO:0005840">
    <property type="term" value="C:ribosome"/>
    <property type="evidence" value="ECO:0007669"/>
    <property type="project" value="UniProtKB-KW"/>
</dbReference>
<dbReference type="GO" id="GO:0003735">
    <property type="term" value="F:structural constituent of ribosome"/>
    <property type="evidence" value="ECO:0007669"/>
    <property type="project" value="InterPro"/>
</dbReference>
<dbReference type="GO" id="GO:0000049">
    <property type="term" value="F:tRNA binding"/>
    <property type="evidence" value="ECO:0007669"/>
    <property type="project" value="UniProtKB-UniRule"/>
</dbReference>
<dbReference type="GO" id="GO:0006412">
    <property type="term" value="P:translation"/>
    <property type="evidence" value="ECO:0007669"/>
    <property type="project" value="UniProtKB-UniRule"/>
</dbReference>
<dbReference type="FunFam" id="3.30.70.600:FF:000001">
    <property type="entry name" value="30S ribosomal protein S10"/>
    <property type="match status" value="1"/>
</dbReference>
<dbReference type="Gene3D" id="3.30.70.600">
    <property type="entry name" value="Ribosomal protein S10 domain"/>
    <property type="match status" value="1"/>
</dbReference>
<dbReference type="HAMAP" id="MF_00508">
    <property type="entry name" value="Ribosomal_uS10"/>
    <property type="match status" value="1"/>
</dbReference>
<dbReference type="InterPro" id="IPR001848">
    <property type="entry name" value="Ribosomal_uS10"/>
</dbReference>
<dbReference type="InterPro" id="IPR027486">
    <property type="entry name" value="Ribosomal_uS10_dom"/>
</dbReference>
<dbReference type="InterPro" id="IPR036838">
    <property type="entry name" value="Ribosomal_uS10_dom_sf"/>
</dbReference>
<dbReference type="NCBIfam" id="NF001861">
    <property type="entry name" value="PRK00596.1"/>
    <property type="match status" value="1"/>
</dbReference>
<dbReference type="NCBIfam" id="TIGR01049">
    <property type="entry name" value="rpsJ_bact"/>
    <property type="match status" value="1"/>
</dbReference>
<dbReference type="PANTHER" id="PTHR11700">
    <property type="entry name" value="30S RIBOSOMAL PROTEIN S10 FAMILY MEMBER"/>
    <property type="match status" value="1"/>
</dbReference>
<dbReference type="Pfam" id="PF00338">
    <property type="entry name" value="Ribosomal_S10"/>
    <property type="match status" value="1"/>
</dbReference>
<dbReference type="PRINTS" id="PR00971">
    <property type="entry name" value="RIBOSOMALS10"/>
</dbReference>
<dbReference type="SMART" id="SM01403">
    <property type="entry name" value="Ribosomal_S10"/>
    <property type="match status" value="1"/>
</dbReference>
<dbReference type="SUPFAM" id="SSF54999">
    <property type="entry name" value="Ribosomal protein S10"/>
    <property type="match status" value="1"/>
</dbReference>
<organism>
    <name type="scientific">Prochlorococcus marinus (strain NATL1A)</name>
    <dbReference type="NCBI Taxonomy" id="167555"/>
    <lineage>
        <taxon>Bacteria</taxon>
        <taxon>Bacillati</taxon>
        <taxon>Cyanobacteriota</taxon>
        <taxon>Cyanophyceae</taxon>
        <taxon>Synechococcales</taxon>
        <taxon>Prochlorococcaceae</taxon>
        <taxon>Prochlorococcus</taxon>
    </lineage>
</organism>
<comment type="function">
    <text evidence="1">Involved in the binding of tRNA to the ribosomes.</text>
</comment>
<comment type="subunit">
    <text evidence="1">Part of the 30S ribosomal subunit.</text>
</comment>
<comment type="similarity">
    <text evidence="1">Belongs to the universal ribosomal protein uS10 family.</text>
</comment>
<gene>
    <name evidence="1" type="primary">rpsJ</name>
    <name evidence="1" type="synonym">rps10</name>
    <name type="ordered locus">NATL1_19481</name>
</gene>
<proteinExistence type="inferred from homology"/>
<feature type="chain" id="PRO_1000015079" description="Small ribosomal subunit protein uS10">
    <location>
        <begin position="1"/>
        <end position="106"/>
    </location>
</feature>